<organism>
    <name type="scientific">Caulobacter sp. (strain K31)</name>
    <dbReference type="NCBI Taxonomy" id="366602"/>
    <lineage>
        <taxon>Bacteria</taxon>
        <taxon>Pseudomonadati</taxon>
        <taxon>Pseudomonadota</taxon>
        <taxon>Alphaproteobacteria</taxon>
        <taxon>Caulobacterales</taxon>
        <taxon>Caulobacteraceae</taxon>
        <taxon>Caulobacter</taxon>
    </lineage>
</organism>
<feature type="chain" id="PRO_1000075003" description="DNA-directed RNA polymerase subunit alpha">
    <location>
        <begin position="1"/>
        <end position="338"/>
    </location>
</feature>
<feature type="region of interest" description="Alpha N-terminal domain (alpha-NTD)" evidence="1">
    <location>
        <begin position="1"/>
        <end position="234"/>
    </location>
</feature>
<feature type="region of interest" description="Alpha C-terminal domain (alpha-CTD)" evidence="1">
    <location>
        <begin position="250"/>
        <end position="338"/>
    </location>
</feature>
<proteinExistence type="inferred from homology"/>
<comment type="function">
    <text evidence="1">DNA-dependent RNA polymerase catalyzes the transcription of DNA into RNA using the four ribonucleoside triphosphates as substrates.</text>
</comment>
<comment type="catalytic activity">
    <reaction evidence="1">
        <text>RNA(n) + a ribonucleoside 5'-triphosphate = RNA(n+1) + diphosphate</text>
        <dbReference type="Rhea" id="RHEA:21248"/>
        <dbReference type="Rhea" id="RHEA-COMP:14527"/>
        <dbReference type="Rhea" id="RHEA-COMP:17342"/>
        <dbReference type="ChEBI" id="CHEBI:33019"/>
        <dbReference type="ChEBI" id="CHEBI:61557"/>
        <dbReference type="ChEBI" id="CHEBI:140395"/>
        <dbReference type="EC" id="2.7.7.6"/>
    </reaction>
</comment>
<comment type="subunit">
    <text evidence="1">Homodimer. The RNAP catalytic core consists of 2 alpha, 1 beta, 1 beta' and 1 omega subunit. When a sigma factor is associated with the core the holoenzyme is formed, which can initiate transcription.</text>
</comment>
<comment type="domain">
    <text evidence="1">The N-terminal domain is essential for RNAP assembly and basal transcription, whereas the C-terminal domain is involved in interaction with transcriptional regulators and with upstream promoter elements.</text>
</comment>
<comment type="similarity">
    <text evidence="1">Belongs to the RNA polymerase alpha chain family.</text>
</comment>
<protein>
    <recommendedName>
        <fullName evidence="1">DNA-directed RNA polymerase subunit alpha</fullName>
        <shortName evidence="1">RNAP subunit alpha</shortName>
        <ecNumber evidence="1">2.7.7.6</ecNumber>
    </recommendedName>
    <alternativeName>
        <fullName evidence="1">RNA polymerase subunit alpha</fullName>
    </alternativeName>
    <alternativeName>
        <fullName evidence="1">Transcriptase subunit alpha</fullName>
    </alternativeName>
</protein>
<reference key="1">
    <citation type="submission" date="2008-01" db="EMBL/GenBank/DDBJ databases">
        <title>Complete sequence of chromosome of Caulobacter sp. K31.</title>
        <authorList>
            <consortium name="US DOE Joint Genome Institute"/>
            <person name="Copeland A."/>
            <person name="Lucas S."/>
            <person name="Lapidus A."/>
            <person name="Barry K."/>
            <person name="Glavina del Rio T."/>
            <person name="Dalin E."/>
            <person name="Tice H."/>
            <person name="Pitluck S."/>
            <person name="Bruce D."/>
            <person name="Goodwin L."/>
            <person name="Thompson L.S."/>
            <person name="Brettin T."/>
            <person name="Detter J.C."/>
            <person name="Han C."/>
            <person name="Schmutz J."/>
            <person name="Larimer F."/>
            <person name="Land M."/>
            <person name="Hauser L."/>
            <person name="Kyrpides N."/>
            <person name="Kim E."/>
            <person name="Stephens C."/>
            <person name="Richardson P."/>
        </authorList>
    </citation>
    <scope>NUCLEOTIDE SEQUENCE [LARGE SCALE GENOMIC DNA]</scope>
    <source>
        <strain>K31</strain>
    </source>
</reference>
<evidence type="ECO:0000255" key="1">
    <source>
        <dbReference type="HAMAP-Rule" id="MF_00059"/>
    </source>
</evidence>
<keyword id="KW-0240">DNA-directed RNA polymerase</keyword>
<keyword id="KW-0548">Nucleotidyltransferase</keyword>
<keyword id="KW-0804">Transcription</keyword>
<keyword id="KW-0808">Transferase</keyword>
<gene>
    <name evidence="1" type="primary">rpoA</name>
    <name type="ordered locus">Caul_1638</name>
</gene>
<accession>B0T2E6</accession>
<dbReference type="EC" id="2.7.7.6" evidence="1"/>
<dbReference type="EMBL" id="CP000927">
    <property type="protein sequence ID" value="ABZ70767.1"/>
    <property type="molecule type" value="Genomic_DNA"/>
</dbReference>
<dbReference type="SMR" id="B0T2E6"/>
<dbReference type="STRING" id="366602.Caul_1638"/>
<dbReference type="KEGG" id="cak:Caul_1638"/>
<dbReference type="eggNOG" id="COG0202">
    <property type="taxonomic scope" value="Bacteria"/>
</dbReference>
<dbReference type="HOGENOM" id="CLU_053084_0_0_5"/>
<dbReference type="OrthoDB" id="9805706at2"/>
<dbReference type="GO" id="GO:0005737">
    <property type="term" value="C:cytoplasm"/>
    <property type="evidence" value="ECO:0007669"/>
    <property type="project" value="UniProtKB-ARBA"/>
</dbReference>
<dbReference type="GO" id="GO:0000428">
    <property type="term" value="C:DNA-directed RNA polymerase complex"/>
    <property type="evidence" value="ECO:0007669"/>
    <property type="project" value="UniProtKB-KW"/>
</dbReference>
<dbReference type="GO" id="GO:0003677">
    <property type="term" value="F:DNA binding"/>
    <property type="evidence" value="ECO:0007669"/>
    <property type="project" value="UniProtKB-UniRule"/>
</dbReference>
<dbReference type="GO" id="GO:0003899">
    <property type="term" value="F:DNA-directed RNA polymerase activity"/>
    <property type="evidence" value="ECO:0007669"/>
    <property type="project" value="UniProtKB-UniRule"/>
</dbReference>
<dbReference type="GO" id="GO:0046983">
    <property type="term" value="F:protein dimerization activity"/>
    <property type="evidence" value="ECO:0007669"/>
    <property type="project" value="InterPro"/>
</dbReference>
<dbReference type="GO" id="GO:0006351">
    <property type="term" value="P:DNA-templated transcription"/>
    <property type="evidence" value="ECO:0007669"/>
    <property type="project" value="UniProtKB-UniRule"/>
</dbReference>
<dbReference type="CDD" id="cd06928">
    <property type="entry name" value="RNAP_alpha_NTD"/>
    <property type="match status" value="1"/>
</dbReference>
<dbReference type="FunFam" id="1.10.150.20:FF:000001">
    <property type="entry name" value="DNA-directed RNA polymerase subunit alpha"/>
    <property type="match status" value="1"/>
</dbReference>
<dbReference type="FunFam" id="2.170.120.12:FF:000001">
    <property type="entry name" value="DNA-directed RNA polymerase subunit alpha"/>
    <property type="match status" value="1"/>
</dbReference>
<dbReference type="Gene3D" id="1.10.150.20">
    <property type="entry name" value="5' to 3' exonuclease, C-terminal subdomain"/>
    <property type="match status" value="1"/>
</dbReference>
<dbReference type="Gene3D" id="2.170.120.12">
    <property type="entry name" value="DNA-directed RNA polymerase, insert domain"/>
    <property type="match status" value="1"/>
</dbReference>
<dbReference type="Gene3D" id="3.30.1360.10">
    <property type="entry name" value="RNA polymerase, RBP11-like subunit"/>
    <property type="match status" value="1"/>
</dbReference>
<dbReference type="HAMAP" id="MF_00059">
    <property type="entry name" value="RNApol_bact_RpoA"/>
    <property type="match status" value="1"/>
</dbReference>
<dbReference type="InterPro" id="IPR011262">
    <property type="entry name" value="DNA-dir_RNA_pol_insert"/>
</dbReference>
<dbReference type="InterPro" id="IPR011263">
    <property type="entry name" value="DNA-dir_RNA_pol_RpoA/D/Rpb3"/>
</dbReference>
<dbReference type="InterPro" id="IPR011773">
    <property type="entry name" value="DNA-dir_RpoA"/>
</dbReference>
<dbReference type="InterPro" id="IPR036603">
    <property type="entry name" value="RBP11-like"/>
</dbReference>
<dbReference type="InterPro" id="IPR011260">
    <property type="entry name" value="RNAP_asu_C"/>
</dbReference>
<dbReference type="InterPro" id="IPR036643">
    <property type="entry name" value="RNApol_insert_sf"/>
</dbReference>
<dbReference type="NCBIfam" id="NF003513">
    <property type="entry name" value="PRK05182.1-2"/>
    <property type="match status" value="1"/>
</dbReference>
<dbReference type="NCBIfam" id="NF003519">
    <property type="entry name" value="PRK05182.2-5"/>
    <property type="match status" value="1"/>
</dbReference>
<dbReference type="NCBIfam" id="TIGR02027">
    <property type="entry name" value="rpoA"/>
    <property type="match status" value="1"/>
</dbReference>
<dbReference type="Pfam" id="PF01000">
    <property type="entry name" value="RNA_pol_A_bac"/>
    <property type="match status" value="1"/>
</dbReference>
<dbReference type="Pfam" id="PF03118">
    <property type="entry name" value="RNA_pol_A_CTD"/>
    <property type="match status" value="1"/>
</dbReference>
<dbReference type="Pfam" id="PF01193">
    <property type="entry name" value="RNA_pol_L"/>
    <property type="match status" value="1"/>
</dbReference>
<dbReference type="SMART" id="SM00662">
    <property type="entry name" value="RPOLD"/>
    <property type="match status" value="1"/>
</dbReference>
<dbReference type="SUPFAM" id="SSF47789">
    <property type="entry name" value="C-terminal domain of RNA polymerase alpha subunit"/>
    <property type="match status" value="1"/>
</dbReference>
<dbReference type="SUPFAM" id="SSF56553">
    <property type="entry name" value="Insert subdomain of RNA polymerase alpha subunit"/>
    <property type="match status" value="1"/>
</dbReference>
<dbReference type="SUPFAM" id="SSF55257">
    <property type="entry name" value="RBP11-like subunits of RNA polymerase"/>
    <property type="match status" value="1"/>
</dbReference>
<name>RPOA_CAUSK</name>
<sequence>MIERNWNELIRPEKPQIETGADATRKARIVAEPLERGFGVTLGNALRRVLLSSLQGAAVTAIQIDGVVHEFSSLEGVREDVVDIVLNIKQLAVRMHAEGPKRMTLRATGPGVVTAGQIETPSDIEILNPDHVLCTLDDGASVRMEFTVNTGKGYVPADKNRPEDAPIGLIAVDALYSPVKRVAYRVEPTRQGQSLDYDKLILEVETNGAVTPVDAVAYAARILQDQLQIFITFEEPKAKTADEAKPELPFNPALLKKVDELELSVRSANCLKNDNIVYIGDLIQKTEAEMLRTPNFGRKSLNEIKEVLAGMGLHLGMDVPNWPPENIEDLAKKFEDQI</sequence>